<gene>
    <name evidence="1" type="primary">psbF</name>
    <name type="ordered locus">CsCp056</name>
</gene>
<reference key="1">
    <citation type="journal article" date="2006" name="Plant Cell Rep.">
        <title>Complete sequence and organization of the cucumber (Cucumis sativus L. cv. Baekmibaekdadagi) chloroplast genome.</title>
        <authorList>
            <person name="Kim J.-S."/>
            <person name="Jung J.D."/>
            <person name="Lee J.-A."/>
            <person name="Park H.-W."/>
            <person name="Oh K.-H."/>
            <person name="Jeong W.J."/>
            <person name="Choi D.-W."/>
            <person name="Liu J.R."/>
            <person name="Cho K.Y."/>
        </authorList>
    </citation>
    <scope>NUCLEOTIDE SEQUENCE [LARGE SCALE GENOMIC DNA]</scope>
    <source>
        <strain>cv. Baekmibaekdadagi</strain>
    </source>
</reference>
<reference key="2">
    <citation type="journal article" date="2007" name="Cell. Mol. Biol. Lett.">
        <title>The complete structure of the cucumber (Cucumis sativus L.) chloroplast genome: its composition and comparative analysis.</title>
        <authorList>
            <person name="Plader W.W."/>
            <person name="Yukawa Y."/>
            <person name="Sugiura M."/>
            <person name="Malepszy S."/>
        </authorList>
    </citation>
    <scope>NUCLEOTIDE SEQUENCE [LARGE SCALE GENOMIC DNA]</scope>
    <source>
        <strain>cv. Borszczagowski</strain>
    </source>
</reference>
<reference key="3">
    <citation type="journal article" date="2007" name="Genome">
        <title>Sequencing cucumber (Cucumis sativus L.) chloroplast genomes identifies differences between chilling-tolerant and -susceptible cucumber lines.</title>
        <authorList>
            <person name="Chung S.-M."/>
            <person name="Gordon V.S."/>
            <person name="Staub J.E."/>
        </authorList>
    </citation>
    <scope>NUCLEOTIDE SEQUENCE [LARGE SCALE GENOMIC DNA]</scope>
    <source>
        <strain>cv. Chipper</strain>
        <strain>cv. Gy14</strain>
    </source>
</reference>
<name>PSBF_CUCSA</name>
<protein>
    <recommendedName>
        <fullName evidence="1">Cytochrome b559 subunit beta</fullName>
    </recommendedName>
    <alternativeName>
        <fullName evidence="1">PSII reaction center subunit VI</fullName>
    </alternativeName>
</protein>
<evidence type="ECO:0000255" key="1">
    <source>
        <dbReference type="HAMAP-Rule" id="MF_00643"/>
    </source>
</evidence>
<proteinExistence type="inferred from homology"/>
<sequence>MTIDKTYPIFTVRWLTVHGLAVPTVSFLGSISAMQFIQR</sequence>
<organism>
    <name type="scientific">Cucumis sativus</name>
    <name type="common">Cucumber</name>
    <dbReference type="NCBI Taxonomy" id="3659"/>
    <lineage>
        <taxon>Eukaryota</taxon>
        <taxon>Viridiplantae</taxon>
        <taxon>Streptophyta</taxon>
        <taxon>Embryophyta</taxon>
        <taxon>Tracheophyta</taxon>
        <taxon>Spermatophyta</taxon>
        <taxon>Magnoliopsida</taxon>
        <taxon>eudicotyledons</taxon>
        <taxon>Gunneridae</taxon>
        <taxon>Pentapetalae</taxon>
        <taxon>rosids</taxon>
        <taxon>fabids</taxon>
        <taxon>Cucurbitales</taxon>
        <taxon>Cucurbitaceae</taxon>
        <taxon>Benincaseae</taxon>
        <taxon>Cucumis</taxon>
    </lineage>
</organism>
<accession>Q4VZH6</accession>
<accession>A5J1V0</accession>
<feature type="chain" id="PRO_0000233636" description="Cytochrome b559 subunit beta">
    <location>
        <begin position="1"/>
        <end position="39"/>
    </location>
</feature>
<feature type="transmembrane region" description="Helical" evidence="1">
    <location>
        <begin position="14"/>
        <end position="30"/>
    </location>
</feature>
<feature type="binding site" description="axial binding residue" evidence="1">
    <location>
        <position position="18"/>
    </location>
    <ligand>
        <name>heme</name>
        <dbReference type="ChEBI" id="CHEBI:30413"/>
        <note>ligand shared with alpha subunit</note>
    </ligand>
    <ligandPart>
        <name>Fe</name>
        <dbReference type="ChEBI" id="CHEBI:18248"/>
    </ligandPart>
</feature>
<geneLocation type="chloroplast"/>
<dbReference type="EMBL" id="DQ119058">
    <property type="protein sequence ID" value="AAZ94667.1"/>
    <property type="molecule type" value="Genomic_DNA"/>
</dbReference>
<dbReference type="EMBL" id="AJ970307">
    <property type="protein sequence ID" value="CAJ00774.1"/>
    <property type="molecule type" value="Genomic_DNA"/>
</dbReference>
<dbReference type="EMBL" id="DQ865975">
    <property type="protein sequence ID" value="ABI97433.1"/>
    <property type="molecule type" value="Genomic_DNA"/>
</dbReference>
<dbReference type="EMBL" id="DQ865976">
    <property type="protein sequence ID" value="ABI98761.1"/>
    <property type="molecule type" value="Genomic_DNA"/>
</dbReference>
<dbReference type="RefSeq" id="YP_247615.1">
    <property type="nucleotide sequence ID" value="NC_007144.1"/>
</dbReference>
<dbReference type="SMR" id="Q4VZH6"/>
<dbReference type="GeneID" id="3429280"/>
<dbReference type="KEGG" id="csv:3429280"/>
<dbReference type="OrthoDB" id="77at2759"/>
<dbReference type="GO" id="GO:0009535">
    <property type="term" value="C:chloroplast thylakoid membrane"/>
    <property type="evidence" value="ECO:0007669"/>
    <property type="project" value="UniProtKB-SubCell"/>
</dbReference>
<dbReference type="GO" id="GO:0009539">
    <property type="term" value="C:photosystem II reaction center"/>
    <property type="evidence" value="ECO:0007669"/>
    <property type="project" value="InterPro"/>
</dbReference>
<dbReference type="GO" id="GO:0009055">
    <property type="term" value="F:electron transfer activity"/>
    <property type="evidence" value="ECO:0007669"/>
    <property type="project" value="UniProtKB-UniRule"/>
</dbReference>
<dbReference type="GO" id="GO:0020037">
    <property type="term" value="F:heme binding"/>
    <property type="evidence" value="ECO:0007669"/>
    <property type="project" value="InterPro"/>
</dbReference>
<dbReference type="GO" id="GO:0005506">
    <property type="term" value="F:iron ion binding"/>
    <property type="evidence" value="ECO:0007669"/>
    <property type="project" value="UniProtKB-UniRule"/>
</dbReference>
<dbReference type="GO" id="GO:0009767">
    <property type="term" value="P:photosynthetic electron transport chain"/>
    <property type="evidence" value="ECO:0007669"/>
    <property type="project" value="InterPro"/>
</dbReference>
<dbReference type="HAMAP" id="MF_00643">
    <property type="entry name" value="PSII_PsbF"/>
    <property type="match status" value="1"/>
</dbReference>
<dbReference type="InterPro" id="IPR006241">
    <property type="entry name" value="PSII_cyt_b559_bsu"/>
</dbReference>
<dbReference type="InterPro" id="IPR006216">
    <property type="entry name" value="PSII_cyt_b559_CS"/>
</dbReference>
<dbReference type="InterPro" id="IPR013081">
    <property type="entry name" value="PSII_cyt_b559_N"/>
</dbReference>
<dbReference type="NCBIfam" id="TIGR01333">
    <property type="entry name" value="cyt_b559_beta"/>
    <property type="match status" value="1"/>
</dbReference>
<dbReference type="Pfam" id="PF00283">
    <property type="entry name" value="Cytochrom_B559"/>
    <property type="match status" value="1"/>
</dbReference>
<dbReference type="PIRSF" id="PIRSF000037">
    <property type="entry name" value="PsbF"/>
    <property type="match status" value="1"/>
</dbReference>
<dbReference type="SUPFAM" id="SSF161045">
    <property type="entry name" value="Cytochrome b559 subunits"/>
    <property type="match status" value="1"/>
</dbReference>
<dbReference type="PROSITE" id="PS00537">
    <property type="entry name" value="CYTOCHROME_B559"/>
    <property type="match status" value="1"/>
</dbReference>
<comment type="function">
    <text evidence="1">This b-type cytochrome is tightly associated with the reaction center of photosystem II (PSII). PSII is a light-driven water:plastoquinone oxidoreductase that uses light energy to abstract electrons from H(2)O, generating O(2) and a proton gradient subsequently used for ATP formation. It consists of a core antenna complex that captures photons, and an electron transfer chain that converts photonic excitation into a charge separation.</text>
</comment>
<comment type="cofactor">
    <cofactor evidence="1">
        <name>heme b</name>
        <dbReference type="ChEBI" id="CHEBI:60344"/>
    </cofactor>
    <text evidence="1">With its partner (PsbE) binds heme. PSII binds additional chlorophylls, carotenoids and specific lipids.</text>
</comment>
<comment type="subunit">
    <text evidence="1">Heterodimer of an alpha subunit and a beta subunit. PSII is composed of 1 copy each of membrane proteins PsbA, PsbB, PsbC, PsbD, PsbE, PsbF, PsbH, PsbI, PsbJ, PsbK, PsbL, PsbM, PsbT, PsbX, PsbY, PsbZ, Psb30/Ycf12, at least 3 peripheral proteins of the oxygen-evolving complex and a large number of cofactors. It forms dimeric complexes.</text>
</comment>
<comment type="subcellular location">
    <subcellularLocation>
        <location evidence="1">Plastid</location>
        <location evidence="1">Chloroplast thylakoid membrane</location>
        <topology evidence="1">Single-pass membrane protein</topology>
    </subcellularLocation>
</comment>
<comment type="similarity">
    <text evidence="1">Belongs to the PsbE/PsbF family.</text>
</comment>
<keyword id="KW-0150">Chloroplast</keyword>
<keyword id="KW-0249">Electron transport</keyword>
<keyword id="KW-0349">Heme</keyword>
<keyword id="KW-0408">Iron</keyword>
<keyword id="KW-0472">Membrane</keyword>
<keyword id="KW-0479">Metal-binding</keyword>
<keyword id="KW-0602">Photosynthesis</keyword>
<keyword id="KW-0604">Photosystem II</keyword>
<keyword id="KW-0934">Plastid</keyword>
<keyword id="KW-0793">Thylakoid</keyword>
<keyword id="KW-0812">Transmembrane</keyword>
<keyword id="KW-1133">Transmembrane helix</keyword>
<keyword id="KW-0813">Transport</keyword>